<evidence type="ECO:0000255" key="1">
    <source>
        <dbReference type="HAMAP-Rule" id="MF_03119"/>
    </source>
</evidence>
<accession>C5PBM5</accession>
<comment type="function">
    <text evidence="1">Catalyzes the interconversion of methylthioribose-1-phosphate (MTR-1-P) into methylthioribulose-1-phosphate (MTRu-1-P).</text>
</comment>
<comment type="catalytic activity">
    <reaction evidence="1">
        <text>5-(methylsulfanyl)-alpha-D-ribose 1-phosphate = 5-(methylsulfanyl)-D-ribulose 1-phosphate</text>
        <dbReference type="Rhea" id="RHEA:19989"/>
        <dbReference type="ChEBI" id="CHEBI:58533"/>
        <dbReference type="ChEBI" id="CHEBI:58548"/>
        <dbReference type="EC" id="5.3.1.23"/>
    </reaction>
</comment>
<comment type="pathway">
    <text evidence="1">Amino-acid biosynthesis; L-methionine biosynthesis via salvage pathway; L-methionine from S-methyl-5-thio-alpha-D-ribose 1-phosphate: step 1/6.</text>
</comment>
<comment type="subcellular location">
    <subcellularLocation>
        <location evidence="1">Cytoplasm</location>
    </subcellularLocation>
    <subcellularLocation>
        <location evidence="1">Nucleus</location>
    </subcellularLocation>
</comment>
<comment type="similarity">
    <text evidence="1">Belongs to the eIF-2B alpha/beta/delta subunits family. MtnA subfamily.</text>
</comment>
<proteinExistence type="inferred from homology"/>
<reference key="1">
    <citation type="journal article" date="2009" name="Genome Res.">
        <title>Comparative genomic analyses of the human fungal pathogens Coccidioides and their relatives.</title>
        <authorList>
            <person name="Sharpton T.J."/>
            <person name="Stajich J.E."/>
            <person name="Rounsley S.D."/>
            <person name="Gardner M.J."/>
            <person name="Wortman J.R."/>
            <person name="Jordar V.S."/>
            <person name="Maiti R."/>
            <person name="Kodira C.D."/>
            <person name="Neafsey D.E."/>
            <person name="Zeng Q."/>
            <person name="Hung C.-Y."/>
            <person name="McMahan C."/>
            <person name="Muszewska A."/>
            <person name="Grynberg M."/>
            <person name="Mandel M.A."/>
            <person name="Kellner E.M."/>
            <person name="Barker B.M."/>
            <person name="Galgiani J.N."/>
            <person name="Orbach M.J."/>
            <person name="Kirkland T.N."/>
            <person name="Cole G.T."/>
            <person name="Henn M.R."/>
            <person name="Birren B.W."/>
            <person name="Taylor J.W."/>
        </authorList>
    </citation>
    <scope>NUCLEOTIDE SEQUENCE [LARGE SCALE GENOMIC DNA]</scope>
    <source>
        <strain>C735</strain>
    </source>
</reference>
<organism>
    <name type="scientific">Coccidioides posadasii (strain C735)</name>
    <name type="common">Valley fever fungus</name>
    <dbReference type="NCBI Taxonomy" id="222929"/>
    <lineage>
        <taxon>Eukaryota</taxon>
        <taxon>Fungi</taxon>
        <taxon>Dikarya</taxon>
        <taxon>Ascomycota</taxon>
        <taxon>Pezizomycotina</taxon>
        <taxon>Eurotiomycetes</taxon>
        <taxon>Eurotiomycetidae</taxon>
        <taxon>Onygenales</taxon>
        <taxon>Onygenaceae</taxon>
        <taxon>Coccidioides</taxon>
    </lineage>
</organism>
<name>MTNA_COCP7</name>
<feature type="chain" id="PRO_0000402025" description="Methylthioribose-1-phosphate isomerase">
    <location>
        <begin position="1"/>
        <end position="390"/>
    </location>
</feature>
<feature type="active site" description="Proton donor" evidence="1">
    <location>
        <position position="258"/>
    </location>
</feature>
<feature type="site" description="Transition state stabilizer" evidence="1">
    <location>
        <position position="176"/>
    </location>
</feature>
<keyword id="KW-0028">Amino-acid biosynthesis</keyword>
<keyword id="KW-0963">Cytoplasm</keyword>
<keyword id="KW-0413">Isomerase</keyword>
<keyword id="KW-0486">Methionine biosynthesis</keyword>
<keyword id="KW-0539">Nucleus</keyword>
<gene>
    <name evidence="1" type="primary">MRI1</name>
    <name type="ORF">CPC735_044530</name>
</gene>
<dbReference type="EC" id="5.3.1.23" evidence="1"/>
<dbReference type="EMBL" id="ACFW01000035">
    <property type="protein sequence ID" value="EER26009.1"/>
    <property type="molecule type" value="Genomic_DNA"/>
</dbReference>
<dbReference type="RefSeq" id="XP_003068154.1">
    <property type="nucleotide sequence ID" value="XM_003068108.1"/>
</dbReference>
<dbReference type="SMR" id="C5PBM5"/>
<dbReference type="GeneID" id="9693637"/>
<dbReference type="KEGG" id="cpw:9693637"/>
<dbReference type="VEuPathDB" id="FungiDB:CPC735_044530"/>
<dbReference type="HOGENOM" id="CLU_016218_1_3_1"/>
<dbReference type="OrthoDB" id="2461at2759"/>
<dbReference type="UniPathway" id="UPA00904">
    <property type="reaction ID" value="UER00874"/>
</dbReference>
<dbReference type="Proteomes" id="UP000009084">
    <property type="component" value="Unassembled WGS sequence"/>
</dbReference>
<dbReference type="GO" id="GO:0005737">
    <property type="term" value="C:cytoplasm"/>
    <property type="evidence" value="ECO:0007669"/>
    <property type="project" value="UniProtKB-SubCell"/>
</dbReference>
<dbReference type="GO" id="GO:0005634">
    <property type="term" value="C:nucleus"/>
    <property type="evidence" value="ECO:0007669"/>
    <property type="project" value="UniProtKB-SubCell"/>
</dbReference>
<dbReference type="GO" id="GO:0046523">
    <property type="term" value="F:S-methyl-5-thioribose-1-phosphate isomerase activity"/>
    <property type="evidence" value="ECO:0007669"/>
    <property type="project" value="UniProtKB-UniRule"/>
</dbReference>
<dbReference type="GO" id="GO:0019509">
    <property type="term" value="P:L-methionine salvage from methylthioadenosine"/>
    <property type="evidence" value="ECO:0007669"/>
    <property type="project" value="UniProtKB-UniRule"/>
</dbReference>
<dbReference type="FunFam" id="1.20.120.420:FF:000003">
    <property type="entry name" value="Methylthioribose-1-phosphate isomerase"/>
    <property type="match status" value="1"/>
</dbReference>
<dbReference type="FunFam" id="3.40.50.10470:FF:000003">
    <property type="entry name" value="Methylthioribose-1-phosphate isomerase"/>
    <property type="match status" value="1"/>
</dbReference>
<dbReference type="Gene3D" id="1.20.120.420">
    <property type="entry name" value="translation initiation factor eif-2b, domain 1"/>
    <property type="match status" value="1"/>
</dbReference>
<dbReference type="Gene3D" id="3.40.50.10470">
    <property type="entry name" value="Translation initiation factor eif-2b, domain 2"/>
    <property type="match status" value="1"/>
</dbReference>
<dbReference type="HAMAP" id="MF_01678">
    <property type="entry name" value="Salvage_MtnA"/>
    <property type="match status" value="1"/>
</dbReference>
<dbReference type="InterPro" id="IPR000649">
    <property type="entry name" value="IF-2B-related"/>
</dbReference>
<dbReference type="InterPro" id="IPR005251">
    <property type="entry name" value="IF-M1Pi"/>
</dbReference>
<dbReference type="InterPro" id="IPR042529">
    <property type="entry name" value="IF_2B-like_C"/>
</dbReference>
<dbReference type="InterPro" id="IPR011559">
    <property type="entry name" value="Initiation_fac_2B_a/b/d"/>
</dbReference>
<dbReference type="InterPro" id="IPR027363">
    <property type="entry name" value="M1Pi_N"/>
</dbReference>
<dbReference type="InterPro" id="IPR037171">
    <property type="entry name" value="NagB/RpiA_transferase-like"/>
</dbReference>
<dbReference type="NCBIfam" id="TIGR00524">
    <property type="entry name" value="eIF-2B_rel"/>
    <property type="match status" value="1"/>
</dbReference>
<dbReference type="NCBIfam" id="NF004326">
    <property type="entry name" value="PRK05720.1"/>
    <property type="match status" value="1"/>
</dbReference>
<dbReference type="NCBIfam" id="TIGR00512">
    <property type="entry name" value="salvage_mtnA"/>
    <property type="match status" value="1"/>
</dbReference>
<dbReference type="PANTHER" id="PTHR43475">
    <property type="entry name" value="METHYLTHIORIBOSE-1-PHOSPHATE ISOMERASE"/>
    <property type="match status" value="1"/>
</dbReference>
<dbReference type="PANTHER" id="PTHR43475:SF1">
    <property type="entry name" value="METHYLTHIORIBOSE-1-PHOSPHATE ISOMERASE"/>
    <property type="match status" value="1"/>
</dbReference>
<dbReference type="Pfam" id="PF01008">
    <property type="entry name" value="IF-2B"/>
    <property type="match status" value="1"/>
</dbReference>
<dbReference type="SUPFAM" id="SSF100950">
    <property type="entry name" value="NagB/RpiA/CoA transferase-like"/>
    <property type="match status" value="1"/>
</dbReference>
<sequence length="390" mass="42305">MTSALEAIRYKRGHLLIIDQLLLPHVTRFIPIRSAEDGWHSIKEMHVRGAPAIAIVAMLSLAVEMSGLVSQQKISKNAEDTRVYIEEKLDYLATSRPTAVNLSDSVRKMKSVLEQKTRTLTCSGEEIAMSFIAYAENMLVHDVADNRSIGEHGANWIVANTPSGVEDSKLCILTHCNTGSLATAGYGTALGIIRHLHEKSQLCHAYCTETRPYNQGARLTAYELVSDQIPATLITDSMAGQLLAKMGQSIAAIVVGADRVASNGDTANKIGTYTLAVLAKYHGVKFVVAAPRTTIDMGTRTGKDIVIEERPHSEVTTITGPRERGDECGNIVMENIKIAADGINVWNPAFDVTPAALIDAIVTEKGVEVKDANGRFHLGSLFETEVRPSN</sequence>
<protein>
    <recommendedName>
        <fullName evidence="1">Methylthioribose-1-phosphate isomerase</fullName>
        <shortName evidence="1">M1Pi</shortName>
        <shortName evidence="1">MTR-1-P isomerase</shortName>
        <ecNumber evidence="1">5.3.1.23</ecNumber>
    </recommendedName>
    <alternativeName>
        <fullName evidence="1">S-methyl-5-thioribose-1-phosphate isomerase</fullName>
    </alternativeName>
    <alternativeName>
        <fullName evidence="1">Translation initiation factor eIF-2B subunit alpha/beta/delta-like protein</fullName>
    </alternativeName>
</protein>